<dbReference type="EMBL" id="CR858783">
    <property type="protein sequence ID" value="CAH90989.1"/>
    <property type="molecule type" value="mRNA"/>
</dbReference>
<dbReference type="RefSeq" id="NP_001128989.1">
    <property type="nucleotide sequence ID" value="NM_001135517.1"/>
</dbReference>
<dbReference type="SMR" id="Q5RB71"/>
<dbReference type="FunCoup" id="Q5RB71">
    <property type="interactions" value="1478"/>
</dbReference>
<dbReference type="STRING" id="9601.ENSPPYP00000018776"/>
<dbReference type="GeneID" id="100190829"/>
<dbReference type="KEGG" id="pon:100190829"/>
<dbReference type="CTD" id="25821"/>
<dbReference type="eggNOG" id="KOG2311">
    <property type="taxonomic scope" value="Eukaryota"/>
</dbReference>
<dbReference type="InParanoid" id="Q5RB71"/>
<dbReference type="OrthoDB" id="3329at2759"/>
<dbReference type="Proteomes" id="UP000001595">
    <property type="component" value="Unplaced"/>
</dbReference>
<dbReference type="GO" id="GO:0005829">
    <property type="term" value="C:cytosol"/>
    <property type="evidence" value="ECO:0007669"/>
    <property type="project" value="TreeGrafter"/>
</dbReference>
<dbReference type="GO" id="GO:0005739">
    <property type="term" value="C:mitochondrion"/>
    <property type="evidence" value="ECO:0007669"/>
    <property type="project" value="UniProtKB-SubCell"/>
</dbReference>
<dbReference type="GO" id="GO:0050660">
    <property type="term" value="F:flavin adenine dinucleotide binding"/>
    <property type="evidence" value="ECO:0007669"/>
    <property type="project" value="InterPro"/>
</dbReference>
<dbReference type="GO" id="GO:0160236">
    <property type="term" value="F:tRNA 5-taurinomethyluridine synthase activity"/>
    <property type="evidence" value="ECO:0000250"/>
    <property type="project" value="UniProtKB"/>
</dbReference>
<dbReference type="GO" id="GO:0070899">
    <property type="term" value="P:mitochondrial tRNA wobble uridine modification"/>
    <property type="evidence" value="ECO:0000250"/>
    <property type="project" value="UniProtKB"/>
</dbReference>
<dbReference type="GO" id="GO:0030488">
    <property type="term" value="P:tRNA methylation"/>
    <property type="evidence" value="ECO:0007669"/>
    <property type="project" value="TreeGrafter"/>
</dbReference>
<dbReference type="FunFam" id="2.40.30.260:FF:000001">
    <property type="entry name" value="protein MTO1 homolog, mitochondrial isoform X1"/>
    <property type="match status" value="1"/>
</dbReference>
<dbReference type="FunFam" id="3.50.50.60:FF:000082">
    <property type="entry name" value="protein MTO1 homolog, mitochondrial isoform X1"/>
    <property type="match status" value="1"/>
</dbReference>
<dbReference type="FunFam" id="1.10.150.570:FF:000001">
    <property type="entry name" value="tRNA uridine 5-carboxymethylaminomethyl modification enzyme MnmG"/>
    <property type="match status" value="1"/>
</dbReference>
<dbReference type="FunFam" id="3.50.50.60:FF:000002">
    <property type="entry name" value="tRNA uridine 5-carboxymethylaminomethyl modification enzyme MnmG"/>
    <property type="match status" value="1"/>
</dbReference>
<dbReference type="Gene3D" id="3.50.50.60">
    <property type="entry name" value="FAD/NAD(P)-binding domain"/>
    <property type="match status" value="2"/>
</dbReference>
<dbReference type="Gene3D" id="1.10.150.570">
    <property type="entry name" value="GidA associated domain, C-terminal subdomain"/>
    <property type="match status" value="1"/>
</dbReference>
<dbReference type="HAMAP" id="MF_00129">
    <property type="entry name" value="MnmG_GidA"/>
    <property type="match status" value="1"/>
</dbReference>
<dbReference type="InterPro" id="IPR036188">
    <property type="entry name" value="FAD/NAD-bd_sf"/>
</dbReference>
<dbReference type="InterPro" id="IPR049312">
    <property type="entry name" value="GIDA_C_N"/>
</dbReference>
<dbReference type="InterPro" id="IPR004416">
    <property type="entry name" value="MnmG"/>
</dbReference>
<dbReference type="InterPro" id="IPR002218">
    <property type="entry name" value="MnmG-rel"/>
</dbReference>
<dbReference type="InterPro" id="IPR020595">
    <property type="entry name" value="MnmG-rel_CS"/>
</dbReference>
<dbReference type="InterPro" id="IPR026904">
    <property type="entry name" value="MnmG_C"/>
</dbReference>
<dbReference type="InterPro" id="IPR047001">
    <property type="entry name" value="MnmG_C_subdom"/>
</dbReference>
<dbReference type="InterPro" id="IPR044920">
    <property type="entry name" value="MnmG_C_subdom_sf"/>
</dbReference>
<dbReference type="InterPro" id="IPR040131">
    <property type="entry name" value="MnmG_N"/>
</dbReference>
<dbReference type="NCBIfam" id="TIGR00136">
    <property type="entry name" value="mnmG_gidA"/>
    <property type="match status" value="1"/>
</dbReference>
<dbReference type="PANTHER" id="PTHR11806">
    <property type="entry name" value="GLUCOSE INHIBITED DIVISION PROTEIN A"/>
    <property type="match status" value="1"/>
</dbReference>
<dbReference type="PANTHER" id="PTHR11806:SF0">
    <property type="entry name" value="PROTEIN MTO1 HOMOLOG, MITOCHONDRIAL"/>
    <property type="match status" value="1"/>
</dbReference>
<dbReference type="Pfam" id="PF01134">
    <property type="entry name" value="GIDA"/>
    <property type="match status" value="1"/>
</dbReference>
<dbReference type="Pfam" id="PF21680">
    <property type="entry name" value="GIDA_C_1st"/>
    <property type="match status" value="1"/>
</dbReference>
<dbReference type="Pfam" id="PF13932">
    <property type="entry name" value="SAM_GIDA_C"/>
    <property type="match status" value="1"/>
</dbReference>
<dbReference type="PRINTS" id="PR00368">
    <property type="entry name" value="FADPNR"/>
</dbReference>
<dbReference type="PRINTS" id="PR00411">
    <property type="entry name" value="PNDRDTASEI"/>
</dbReference>
<dbReference type="SMART" id="SM01228">
    <property type="entry name" value="GIDA_assoc_3"/>
    <property type="match status" value="1"/>
</dbReference>
<dbReference type="SUPFAM" id="SSF51905">
    <property type="entry name" value="FAD/NAD(P)-binding domain"/>
    <property type="match status" value="1"/>
</dbReference>
<dbReference type="PROSITE" id="PS01280">
    <property type="entry name" value="GIDA_1"/>
    <property type="match status" value="1"/>
</dbReference>
<dbReference type="PROSITE" id="PS01281">
    <property type="entry name" value="GIDA_2"/>
    <property type="match status" value="1"/>
</dbReference>
<accession>Q5RB71</accession>
<organism>
    <name type="scientific">Pongo abelii</name>
    <name type="common">Sumatran orangutan</name>
    <name type="synonym">Pongo pygmaeus abelii</name>
    <dbReference type="NCBI Taxonomy" id="9601"/>
    <lineage>
        <taxon>Eukaryota</taxon>
        <taxon>Metazoa</taxon>
        <taxon>Chordata</taxon>
        <taxon>Craniata</taxon>
        <taxon>Vertebrata</taxon>
        <taxon>Euteleostomi</taxon>
        <taxon>Mammalia</taxon>
        <taxon>Eutheria</taxon>
        <taxon>Euarchontoglires</taxon>
        <taxon>Primates</taxon>
        <taxon>Haplorrhini</taxon>
        <taxon>Catarrhini</taxon>
        <taxon>Hominidae</taxon>
        <taxon>Pongo</taxon>
    </lineage>
</organism>
<gene>
    <name type="primary">MTO1</name>
</gene>
<feature type="transit peptide" description="Mitochondrion" evidence="4">
    <location>
        <begin position="1"/>
        <end position="25"/>
    </location>
</feature>
<feature type="chain" id="PRO_0000042691" description="5-taurinomethyluridine-[tRNA] synthase subunit MTO1, mitochondrial">
    <location>
        <begin position="26"/>
        <end position="692"/>
    </location>
</feature>
<feature type="binding site" evidence="2">
    <location>
        <begin position="43"/>
        <end position="48"/>
    </location>
    <ligand>
        <name>FAD</name>
        <dbReference type="ChEBI" id="CHEBI:57692"/>
    </ligand>
</feature>
<feature type="binding site" evidence="2">
    <location>
        <position position="155"/>
    </location>
    <ligand>
        <name>FAD</name>
        <dbReference type="ChEBI" id="CHEBI:57692"/>
    </ligand>
</feature>
<feature type="binding site" evidence="2">
    <location>
        <position position="218"/>
    </location>
    <ligand>
        <name>FAD</name>
        <dbReference type="ChEBI" id="CHEBI:57692"/>
    </ligand>
</feature>
<feature type="binding site" evidence="2">
    <location>
        <position position="407"/>
    </location>
    <ligand>
        <name>FAD</name>
        <dbReference type="ChEBI" id="CHEBI:57692"/>
    </ligand>
</feature>
<feature type="modified residue" description="N6-methyllysine" evidence="3">
    <location>
        <position position="508"/>
    </location>
</feature>
<proteinExistence type="evidence at transcript level"/>
<protein>
    <recommendedName>
        <fullName evidence="3">5-taurinomethyluridine-[tRNA] synthase subunit MTO1, mitochondrial</fullName>
    </recommendedName>
    <alternativeName>
        <fullName evidence="3">Mitochondrial tRNA translation optimization 1</fullName>
    </alternativeName>
    <alternativeName>
        <fullName evidence="3">Protein MTO1 homolog, mitochondrial</fullName>
    </alternativeName>
</protein>
<sequence>MFYFRGCGRWVAASFTKLQFPLARLSSDSTAPRTPHFDVIVIGGGHAGTEAATAAARCGSRTLLLTHRVDTIGQMSCNPSFGGIGKGHLMREVDALDGLCSRICDQSGVHYKVLNRRKGPAVWGLRAQIDRKLYKQNMQKEILNTPLLTVQEGAVEDLILTEPEPEHTGKCRVSGVVLVDGSTVYAESVILTTGTFLRGIIVIGLETHPAGRLGDQPSIGLAQTLEKLGFVVGRLKTGTPPRIAKESINFSILNKHTPDNPSIPFSFTNETVWIKPEDQLPCYLTHTNPRVDEIVLKNLHLNSHVKETTRGPRYCPSIESKVLRFPNRLHQVWLEPEGMDSDLIYPQGLSMTLPAELQEKMITCIRGLEKAKVIQPGYGVQYDYLDPRQITPSLETHLVQRLFFAGQINGTTGYEEAAAQGVIAGINASLRVSRKPPFVVSRTEGYIGVLIDDLTTLGTSEPYRMFTSRVEFRLSLRPDNADSRLTLRGYKDAGCVSQQRYERACWMKSSLEEGISVLKSIEFSSSKWKKLIPEASISTSRSLPVRALDVLKYEEVDMDSLAKAVPEPLKKYTKCRELAERLKIEATYESVLFHQLQEIKGVQQDEALQLPKDLDYLTIRDVSLSHEVREKLHFSRPQTIGAASRIPGVTPAAIINLLRFVKTTQRRQAAMNESSKTDQYLCDADRLREREL</sequence>
<comment type="function">
    <text evidence="3">Component of the GTPBP3-MTO1 complex that catalyzes the 5-taurinomethyluridine (taum(5)U) modification at the 34th wobble position (U34) of mitochondrial tRNAs (mt-tRNAs), which plays a role in mt-tRNA decoding and mitochondrial translation. Taum(5)U formation on mammalian mt-tRNA requires the presence of both GTPBP3-mediated GTPase activity and MTO1 catalytic activity.</text>
</comment>
<comment type="catalytic activity">
    <reaction evidence="3">
        <text>5,10-methylenetetrahydrofolate + uridine(34) in tRNA + taurine + GTP + A + H2O = 5-taurinomethyluridine(34) in tRNA + 7,8-dihydrofolate + GDP + AH2 + phosphate + H(+)</text>
        <dbReference type="Rhea" id="RHEA:83279"/>
        <dbReference type="Rhea" id="RHEA-COMP:11727"/>
        <dbReference type="Rhea" id="RHEA-COMP:11732"/>
        <dbReference type="ChEBI" id="CHEBI:12071"/>
        <dbReference type="ChEBI" id="CHEBI:13193"/>
        <dbReference type="ChEBI" id="CHEBI:15377"/>
        <dbReference type="ChEBI" id="CHEBI:15378"/>
        <dbReference type="ChEBI" id="CHEBI:17499"/>
        <dbReference type="ChEBI" id="CHEBI:37565"/>
        <dbReference type="ChEBI" id="CHEBI:43474"/>
        <dbReference type="ChEBI" id="CHEBI:57451"/>
        <dbReference type="ChEBI" id="CHEBI:58189"/>
        <dbReference type="ChEBI" id="CHEBI:65315"/>
        <dbReference type="ChEBI" id="CHEBI:87172"/>
        <dbReference type="ChEBI" id="CHEBI:507393"/>
    </reaction>
    <physiologicalReaction direction="left-to-right" evidence="3">
        <dbReference type="Rhea" id="RHEA:83280"/>
    </physiologicalReaction>
</comment>
<comment type="cofactor">
    <cofactor evidence="2">
        <name>FAD</name>
        <dbReference type="ChEBI" id="CHEBI:57692"/>
    </cofactor>
</comment>
<comment type="subunit">
    <text evidence="3">Homodimer; forms a dimer in the presence of potassium. Interacts with GTPBP3; forms the GTPBP3-MTO1 complex composed of homodimers of GTPBP3 and MTO1.</text>
</comment>
<comment type="subcellular location">
    <subcellularLocation>
        <location evidence="1">Mitochondrion</location>
    </subcellularLocation>
</comment>
<comment type="similarity">
    <text evidence="5">Belongs to the MnmG family.</text>
</comment>
<evidence type="ECO:0000250" key="1"/>
<evidence type="ECO:0000250" key="2">
    <source>
        <dbReference type="UniProtKB" id="O66962"/>
    </source>
</evidence>
<evidence type="ECO:0000250" key="3">
    <source>
        <dbReference type="UniProtKB" id="Q9Y2Z2"/>
    </source>
</evidence>
<evidence type="ECO:0000255" key="4"/>
<evidence type="ECO:0000305" key="5"/>
<keyword id="KW-0274">FAD</keyword>
<keyword id="KW-0285">Flavoprotein</keyword>
<keyword id="KW-0488">Methylation</keyword>
<keyword id="KW-0496">Mitochondrion</keyword>
<keyword id="KW-1185">Reference proteome</keyword>
<keyword id="KW-0809">Transit peptide</keyword>
<keyword id="KW-0819">tRNA processing</keyword>
<reference key="1">
    <citation type="submission" date="2004-11" db="EMBL/GenBank/DDBJ databases">
        <authorList>
            <consortium name="The German cDNA consortium"/>
        </authorList>
    </citation>
    <scope>NUCLEOTIDE SEQUENCE [LARGE SCALE MRNA]</scope>
    <source>
        <tissue>Heart</tissue>
    </source>
</reference>
<name>MTO1_PONAB</name>